<gene>
    <name type="primary">ANKRD33B</name>
</gene>
<evidence type="ECO:0000250" key="1">
    <source>
        <dbReference type="UniProtKB" id="Q3U0L2"/>
    </source>
</evidence>
<evidence type="ECO:0000255" key="2"/>
<evidence type="ECO:0000256" key="3">
    <source>
        <dbReference type="SAM" id="MobiDB-lite"/>
    </source>
</evidence>
<proteinExistence type="evidence at protein level"/>
<reference key="1">
    <citation type="journal article" date="2004" name="Nature">
        <title>The DNA sequence and comparative analysis of human chromosome 5.</title>
        <authorList>
            <person name="Schmutz J."/>
            <person name="Martin J."/>
            <person name="Terry A."/>
            <person name="Couronne O."/>
            <person name="Grimwood J."/>
            <person name="Lowry S."/>
            <person name="Gordon L.A."/>
            <person name="Scott D."/>
            <person name="Xie G."/>
            <person name="Huang W."/>
            <person name="Hellsten U."/>
            <person name="Tran-Gyamfi M."/>
            <person name="She X."/>
            <person name="Prabhakar S."/>
            <person name="Aerts A."/>
            <person name="Altherr M."/>
            <person name="Bajorek E."/>
            <person name="Black S."/>
            <person name="Branscomb E."/>
            <person name="Caoile C."/>
            <person name="Challacombe J.F."/>
            <person name="Chan Y.M."/>
            <person name="Denys M."/>
            <person name="Detter J.C."/>
            <person name="Escobar J."/>
            <person name="Flowers D."/>
            <person name="Fotopulos D."/>
            <person name="Glavina T."/>
            <person name="Gomez M."/>
            <person name="Gonzales E."/>
            <person name="Goodstein D."/>
            <person name="Grigoriev I."/>
            <person name="Groza M."/>
            <person name="Hammon N."/>
            <person name="Hawkins T."/>
            <person name="Haydu L."/>
            <person name="Israni S."/>
            <person name="Jett J."/>
            <person name="Kadner K."/>
            <person name="Kimball H."/>
            <person name="Kobayashi A."/>
            <person name="Lopez F."/>
            <person name="Lou Y."/>
            <person name="Martinez D."/>
            <person name="Medina C."/>
            <person name="Morgan J."/>
            <person name="Nandkeshwar R."/>
            <person name="Noonan J.P."/>
            <person name="Pitluck S."/>
            <person name="Pollard M."/>
            <person name="Predki P."/>
            <person name="Priest J."/>
            <person name="Ramirez L."/>
            <person name="Retterer J."/>
            <person name="Rodriguez A."/>
            <person name="Rogers S."/>
            <person name="Salamov A."/>
            <person name="Salazar A."/>
            <person name="Thayer N."/>
            <person name="Tice H."/>
            <person name="Tsai M."/>
            <person name="Ustaszewska A."/>
            <person name="Vo N."/>
            <person name="Wheeler J."/>
            <person name="Wu K."/>
            <person name="Yang J."/>
            <person name="Dickson M."/>
            <person name="Cheng J.-F."/>
            <person name="Eichler E.E."/>
            <person name="Olsen A."/>
            <person name="Pennacchio L.A."/>
            <person name="Rokhsar D.S."/>
            <person name="Richardson P."/>
            <person name="Lucas S.M."/>
            <person name="Myers R.M."/>
            <person name="Rubin E.M."/>
        </authorList>
    </citation>
    <scope>NUCLEOTIDE SEQUENCE [LARGE SCALE GENOMIC DNA]</scope>
</reference>
<name>AN33B_HUMAN</name>
<sequence>MVLLAGTGPEGGGARCMTPPPPSPPRGAQVEEDPADYEEFEDFSSLPDTRSIASDDSFYPFEDEEEHGVESAESVPEGVPESVPETATLLRAACANNVGLLRTLVRRGVSVEEAQETDRNGRTGLIVACYHGFVDTVVALAECPHVDVNWQDSEGNTALITAAQAGHAIITNYLLNYFPGLDLERRNAFGFTALMKAAMQGRTDCIRALMLAGADVHARDPRRGMSPQEWATYTGRVDAVRLMQRLLERPCPEQFWEKYRPELPPPPEAARKPAGSKNCLQRLTDCVLSVLTPRSVRGPEDGGVLDHMVRMTTSLYSPAVAIVCQTVCPESPPSVGKRRLAVQEILAARAARGPQAQEEDEVGGAGQRGRTGQEDADSREGSPRAGLPPALGSRGPAAPAPRKASLLPLQRLRRRSVRPGVVVPRVRVSKAPAPTFQPERPARKGSTKDSGHLQIPKWRYKEAKEEKRKAEEAEKKRQAEAQKERRTAPWKKRT</sequence>
<dbReference type="EMBL" id="AC112200">
    <property type="status" value="NOT_ANNOTATED_CDS"/>
    <property type="molecule type" value="Genomic_DNA"/>
</dbReference>
<dbReference type="CCDS" id="CCDS47191.1"/>
<dbReference type="RefSeq" id="NP_001157912.1">
    <property type="nucleotide sequence ID" value="NM_001164440.2"/>
</dbReference>
<dbReference type="SMR" id="A6NCL7"/>
<dbReference type="BioGRID" id="574599">
    <property type="interactions" value="8"/>
</dbReference>
<dbReference type="FunCoup" id="A6NCL7">
    <property type="interactions" value="97"/>
</dbReference>
<dbReference type="IntAct" id="A6NCL7">
    <property type="interactions" value="3"/>
</dbReference>
<dbReference type="STRING" id="9606.ENSP00000296657"/>
<dbReference type="GlyGen" id="A6NCL7">
    <property type="glycosylation" value="1 site, 1 O-linked glycan (1 site)"/>
</dbReference>
<dbReference type="iPTMnet" id="A6NCL7"/>
<dbReference type="PhosphoSitePlus" id="A6NCL7"/>
<dbReference type="BioMuta" id="ANKRD33B"/>
<dbReference type="jPOST" id="A6NCL7"/>
<dbReference type="MassIVE" id="A6NCL7"/>
<dbReference type="PaxDb" id="9606-ENSP00000296657"/>
<dbReference type="PeptideAtlas" id="A6NCL7"/>
<dbReference type="ProteomicsDB" id="844"/>
<dbReference type="Antibodypedia" id="58746">
    <property type="antibodies" value="9 antibodies from 6 providers"/>
</dbReference>
<dbReference type="DNASU" id="651746"/>
<dbReference type="Ensembl" id="ENST00000296657.7">
    <property type="protein sequence ID" value="ENSP00000296657.4"/>
    <property type="gene ID" value="ENSG00000164236.12"/>
</dbReference>
<dbReference type="GeneID" id="651746"/>
<dbReference type="KEGG" id="hsa:651746"/>
<dbReference type="MANE-Select" id="ENST00000296657.7">
    <property type="protein sequence ID" value="ENSP00000296657.4"/>
    <property type="RefSeq nucleotide sequence ID" value="NM_001164440.2"/>
    <property type="RefSeq protein sequence ID" value="NP_001157912.1"/>
</dbReference>
<dbReference type="UCSC" id="uc021xwp.2">
    <property type="organism name" value="human"/>
</dbReference>
<dbReference type="AGR" id="HGNC:35240"/>
<dbReference type="CTD" id="651746"/>
<dbReference type="DisGeNET" id="651746"/>
<dbReference type="GeneCards" id="ANKRD33B"/>
<dbReference type="HGNC" id="HGNC:35240">
    <property type="gene designation" value="ANKRD33B"/>
</dbReference>
<dbReference type="HPA" id="ENSG00000164236">
    <property type="expression patterns" value="Tissue enriched (retina)"/>
</dbReference>
<dbReference type="neXtProt" id="NX_A6NCL7"/>
<dbReference type="OpenTargets" id="ENSG00000164236"/>
<dbReference type="PharmGKB" id="PA164715326"/>
<dbReference type="VEuPathDB" id="HostDB:ENSG00000164236"/>
<dbReference type="eggNOG" id="ENOG502S4H1">
    <property type="taxonomic scope" value="Eukaryota"/>
</dbReference>
<dbReference type="GeneTree" id="ENSGT00500000044852"/>
<dbReference type="HOGENOM" id="CLU_049994_1_0_1"/>
<dbReference type="InParanoid" id="A6NCL7"/>
<dbReference type="OMA" id="VTLCKAP"/>
<dbReference type="OrthoDB" id="10057496at2759"/>
<dbReference type="PAN-GO" id="A6NCL7">
    <property type="GO annotations" value="0 GO annotations based on evolutionary models"/>
</dbReference>
<dbReference type="PhylomeDB" id="A6NCL7"/>
<dbReference type="TreeFam" id="TF332022"/>
<dbReference type="PathwayCommons" id="A6NCL7"/>
<dbReference type="SignaLink" id="A6NCL7"/>
<dbReference type="BioGRID-ORCS" id="651746">
    <property type="hits" value="13 hits in 1145 CRISPR screens"/>
</dbReference>
<dbReference type="ChiTaRS" id="ANKRD33B">
    <property type="organism name" value="human"/>
</dbReference>
<dbReference type="GenomeRNAi" id="651746"/>
<dbReference type="Pharos" id="A6NCL7">
    <property type="development level" value="Tdark"/>
</dbReference>
<dbReference type="PRO" id="PR:A6NCL7"/>
<dbReference type="Proteomes" id="UP000005640">
    <property type="component" value="Chromosome 5"/>
</dbReference>
<dbReference type="RNAct" id="A6NCL7">
    <property type="molecule type" value="protein"/>
</dbReference>
<dbReference type="Bgee" id="ENSG00000164236">
    <property type="expression patterns" value="Expressed in Brodmann (1909) area 23 and 123 other cell types or tissues"/>
</dbReference>
<dbReference type="ExpressionAtlas" id="A6NCL7">
    <property type="expression patterns" value="baseline and differential"/>
</dbReference>
<dbReference type="Gene3D" id="1.25.40.20">
    <property type="entry name" value="Ankyrin repeat-containing domain"/>
    <property type="match status" value="1"/>
</dbReference>
<dbReference type="InterPro" id="IPR002110">
    <property type="entry name" value="Ankyrin_rpt"/>
</dbReference>
<dbReference type="InterPro" id="IPR036770">
    <property type="entry name" value="Ankyrin_rpt-contain_sf"/>
</dbReference>
<dbReference type="PANTHER" id="PTHR24173">
    <property type="entry name" value="ANKYRIN REPEAT CONTAINING"/>
    <property type="match status" value="1"/>
</dbReference>
<dbReference type="PANTHER" id="PTHR24173:SF1">
    <property type="entry name" value="ANKYRIN REPEAT DOMAIN-CONTAINING PROTEIN 33B"/>
    <property type="match status" value="1"/>
</dbReference>
<dbReference type="Pfam" id="PF00023">
    <property type="entry name" value="Ank"/>
    <property type="match status" value="1"/>
</dbReference>
<dbReference type="Pfam" id="PF12796">
    <property type="entry name" value="Ank_2"/>
    <property type="match status" value="1"/>
</dbReference>
<dbReference type="SMART" id="SM00248">
    <property type="entry name" value="ANK"/>
    <property type="match status" value="5"/>
</dbReference>
<dbReference type="SUPFAM" id="SSF48403">
    <property type="entry name" value="Ankyrin repeat"/>
    <property type="match status" value="1"/>
</dbReference>
<dbReference type="PROSITE" id="PS50297">
    <property type="entry name" value="ANK_REP_REGION"/>
    <property type="match status" value="1"/>
</dbReference>
<dbReference type="PROSITE" id="PS50088">
    <property type="entry name" value="ANK_REPEAT"/>
    <property type="match status" value="1"/>
</dbReference>
<protein>
    <recommendedName>
        <fullName>Ankyrin repeat domain-containing protein 33B</fullName>
    </recommendedName>
</protein>
<organism>
    <name type="scientific">Homo sapiens</name>
    <name type="common">Human</name>
    <dbReference type="NCBI Taxonomy" id="9606"/>
    <lineage>
        <taxon>Eukaryota</taxon>
        <taxon>Metazoa</taxon>
        <taxon>Chordata</taxon>
        <taxon>Craniata</taxon>
        <taxon>Vertebrata</taxon>
        <taxon>Euteleostomi</taxon>
        <taxon>Mammalia</taxon>
        <taxon>Eutheria</taxon>
        <taxon>Euarchontoglires</taxon>
        <taxon>Primates</taxon>
        <taxon>Haplorrhini</taxon>
        <taxon>Catarrhini</taxon>
        <taxon>Hominidae</taxon>
        <taxon>Homo</taxon>
    </lineage>
</organism>
<keyword id="KW-0040">ANK repeat</keyword>
<keyword id="KW-0175">Coiled coil</keyword>
<keyword id="KW-0597">Phosphoprotein</keyword>
<keyword id="KW-1267">Proteomics identification</keyword>
<keyword id="KW-1185">Reference proteome</keyword>
<keyword id="KW-0677">Repeat</keyword>
<feature type="chain" id="PRO_0000328769" description="Ankyrin repeat domain-containing protein 33B">
    <location>
        <begin position="1"/>
        <end position="494"/>
    </location>
</feature>
<feature type="repeat" description="ANK 1">
    <location>
        <begin position="84"/>
        <end position="113"/>
    </location>
</feature>
<feature type="repeat" description="ANK 2">
    <location>
        <begin position="120"/>
        <end position="150"/>
    </location>
</feature>
<feature type="repeat" description="ANK 3">
    <location>
        <begin position="154"/>
        <end position="183"/>
    </location>
</feature>
<feature type="repeat" description="ANK 4">
    <location>
        <begin position="189"/>
        <end position="218"/>
    </location>
</feature>
<feature type="repeat" description="ANK 5">
    <location>
        <begin position="223"/>
        <end position="255"/>
    </location>
</feature>
<feature type="region of interest" description="Disordered" evidence="3">
    <location>
        <begin position="1"/>
        <end position="80"/>
    </location>
</feature>
<feature type="region of interest" description="Disordered" evidence="3">
    <location>
        <begin position="349"/>
        <end position="494"/>
    </location>
</feature>
<feature type="coiled-coil region" evidence="2">
    <location>
        <begin position="459"/>
        <end position="488"/>
    </location>
</feature>
<feature type="compositionally biased region" description="Acidic residues" evidence="3">
    <location>
        <begin position="30"/>
        <end position="42"/>
    </location>
</feature>
<feature type="compositionally biased region" description="Basic and acidic residues" evidence="3">
    <location>
        <begin position="371"/>
        <end position="382"/>
    </location>
</feature>
<feature type="compositionally biased region" description="Basic and acidic residues" evidence="3">
    <location>
        <begin position="440"/>
        <end position="451"/>
    </location>
</feature>
<feature type="compositionally biased region" description="Basic and acidic residues" evidence="3">
    <location>
        <begin position="459"/>
        <end position="487"/>
    </location>
</feature>
<feature type="modified residue" description="Phosphoserine" evidence="1">
    <location>
        <position position="405"/>
    </location>
</feature>
<accession>A6NCL7</accession>